<organism>
    <name type="scientific">Caenorhabditis elegans</name>
    <dbReference type="NCBI Taxonomy" id="6239"/>
    <lineage>
        <taxon>Eukaryota</taxon>
        <taxon>Metazoa</taxon>
        <taxon>Ecdysozoa</taxon>
        <taxon>Nematoda</taxon>
        <taxon>Chromadorea</taxon>
        <taxon>Rhabditida</taxon>
        <taxon>Rhabditina</taxon>
        <taxon>Rhabditomorpha</taxon>
        <taxon>Rhabditoidea</taxon>
        <taxon>Rhabditidae</taxon>
        <taxon>Peloderinae</taxon>
        <taxon>Caenorhabditis</taxon>
    </lineage>
</organism>
<keyword id="KW-1185">Reference proteome</keyword>
<protein>
    <recommendedName>
        <fullName>Uncharacterized protein K12H4.6</fullName>
    </recommendedName>
</protein>
<sequence length="81" mass="8039">MPQSKQQFKRQGARQRDSKGKFVKARTGMATAPPAAVSTAAPTASTMTPTGSSTTATIGGATTGASTTTAVTGCGCNCCSH</sequence>
<evidence type="ECO:0000256" key="1">
    <source>
        <dbReference type="SAM" id="MobiDB-lite"/>
    </source>
</evidence>
<accession>P34527</accession>
<name>YM66_CAEEL</name>
<proteinExistence type="predicted"/>
<dbReference type="EMBL" id="FO081380">
    <property type="protein sequence ID" value="CCD71201.1"/>
    <property type="molecule type" value="Genomic_DNA"/>
</dbReference>
<dbReference type="PIR" id="S44855">
    <property type="entry name" value="S44855"/>
</dbReference>
<dbReference type="RefSeq" id="NP_498753.2">
    <property type="nucleotide sequence ID" value="NM_066352.3"/>
</dbReference>
<dbReference type="PaxDb" id="6239-K12H4.6"/>
<dbReference type="EnsemblMetazoa" id="K12H4.6.1">
    <property type="protein sequence ID" value="K12H4.6.1"/>
    <property type="gene ID" value="WBGene00019681"/>
</dbReference>
<dbReference type="GeneID" id="187338"/>
<dbReference type="KEGG" id="cel:CELE_K12H4.6"/>
<dbReference type="UCSC" id="K12H4.6">
    <property type="organism name" value="c. elegans"/>
</dbReference>
<dbReference type="AGR" id="WB:WBGene00019681"/>
<dbReference type="CTD" id="187338"/>
<dbReference type="WormBase" id="K12H4.6">
    <property type="protein sequence ID" value="CE44945"/>
    <property type="gene ID" value="WBGene00019681"/>
</dbReference>
<dbReference type="HOGENOM" id="CLU_2576011_0_0_1"/>
<dbReference type="InParanoid" id="P34527"/>
<dbReference type="PRO" id="PR:P34527"/>
<dbReference type="Proteomes" id="UP000001940">
    <property type="component" value="Chromosome III"/>
</dbReference>
<dbReference type="Bgee" id="WBGene00019681">
    <property type="expression patterns" value="Expressed in larva and 2 other cell types or tissues"/>
</dbReference>
<gene>
    <name type="ORF">K12H4.6</name>
</gene>
<feature type="chain" id="PRO_0000065413" description="Uncharacterized protein K12H4.6">
    <location>
        <begin position="1"/>
        <end position="81"/>
    </location>
</feature>
<feature type="region of interest" description="Disordered" evidence="1">
    <location>
        <begin position="1"/>
        <end position="58"/>
    </location>
</feature>
<feature type="compositionally biased region" description="Low complexity" evidence="1">
    <location>
        <begin position="30"/>
        <end position="58"/>
    </location>
</feature>
<reference key="1">
    <citation type="journal article" date="1994" name="Nature">
        <title>2.2 Mb of contiguous nucleotide sequence from chromosome III of C. elegans.</title>
        <authorList>
            <person name="Wilson R."/>
            <person name="Ainscough R."/>
            <person name="Anderson K."/>
            <person name="Baynes C."/>
            <person name="Berks M."/>
            <person name="Bonfield J."/>
            <person name="Burton J."/>
            <person name="Connell M."/>
            <person name="Copsey T."/>
            <person name="Cooper J."/>
            <person name="Coulson A."/>
            <person name="Craxton M."/>
            <person name="Dear S."/>
            <person name="Du Z."/>
            <person name="Durbin R."/>
            <person name="Favello A."/>
            <person name="Fraser A."/>
            <person name="Fulton L."/>
            <person name="Gardner A."/>
            <person name="Green P."/>
            <person name="Hawkins T."/>
            <person name="Hillier L."/>
            <person name="Jier M."/>
            <person name="Johnston L."/>
            <person name="Jones M."/>
            <person name="Kershaw J."/>
            <person name="Kirsten J."/>
            <person name="Laisster N."/>
            <person name="Latreille P."/>
            <person name="Lightning J."/>
            <person name="Lloyd C."/>
            <person name="Mortimore B."/>
            <person name="O'Callaghan M."/>
            <person name="Parsons J."/>
            <person name="Percy C."/>
            <person name="Rifken L."/>
            <person name="Roopra A."/>
            <person name="Saunders D."/>
            <person name="Shownkeen R."/>
            <person name="Sims M."/>
            <person name="Smaldon N."/>
            <person name="Smith A."/>
            <person name="Smith M."/>
            <person name="Sonnhammer E."/>
            <person name="Staden R."/>
            <person name="Sulston J."/>
            <person name="Thierry-Mieg J."/>
            <person name="Thomas K."/>
            <person name="Vaudin M."/>
            <person name="Vaughan K."/>
            <person name="Waterston R."/>
            <person name="Watson A."/>
            <person name="Weinstock L."/>
            <person name="Wilkinson-Sproat J."/>
            <person name="Wohldman P."/>
        </authorList>
    </citation>
    <scope>NUCLEOTIDE SEQUENCE [LARGE SCALE GENOMIC DNA]</scope>
    <source>
        <strain>Bristol N2</strain>
    </source>
</reference>
<reference key="2">
    <citation type="journal article" date="1998" name="Science">
        <title>Genome sequence of the nematode C. elegans: a platform for investigating biology.</title>
        <authorList>
            <consortium name="The C. elegans sequencing consortium"/>
        </authorList>
    </citation>
    <scope>NUCLEOTIDE SEQUENCE [LARGE SCALE GENOMIC DNA]</scope>
    <source>
        <strain>Bristol N2</strain>
    </source>
</reference>